<keyword id="KW-1185">Reference proteome</keyword>
<protein>
    <recommendedName>
        <fullName>F-box protein At5g03100</fullName>
    </recommendedName>
</protein>
<proteinExistence type="evidence at transcript level"/>
<gene>
    <name type="ordered locus">At5g03100</name>
    <name type="ORF">F15A17.130</name>
    <name type="ORF">MOK16.1</name>
</gene>
<reference key="1">
    <citation type="journal article" date="1997" name="DNA Res.">
        <title>Structural analysis of Arabidopsis thaliana chromosome 5. I. Sequence features of the 1.6 Mb regions covered by twenty physically assigned P1 clones.</title>
        <authorList>
            <person name="Sato S."/>
            <person name="Kotani H."/>
            <person name="Nakamura Y."/>
            <person name="Kaneko T."/>
            <person name="Asamizu E."/>
            <person name="Fukami M."/>
            <person name="Miyajima N."/>
            <person name="Tabata S."/>
        </authorList>
    </citation>
    <scope>NUCLEOTIDE SEQUENCE [LARGE SCALE GENOMIC DNA]</scope>
    <source>
        <strain>cv. Columbia</strain>
    </source>
</reference>
<reference key="2">
    <citation type="journal article" date="2000" name="Nature">
        <title>Sequence and analysis of chromosome 5 of the plant Arabidopsis thaliana.</title>
        <authorList>
            <person name="Tabata S."/>
            <person name="Kaneko T."/>
            <person name="Nakamura Y."/>
            <person name="Kotani H."/>
            <person name="Kato T."/>
            <person name="Asamizu E."/>
            <person name="Miyajima N."/>
            <person name="Sasamoto S."/>
            <person name="Kimura T."/>
            <person name="Hosouchi T."/>
            <person name="Kawashima K."/>
            <person name="Kohara M."/>
            <person name="Matsumoto M."/>
            <person name="Matsuno A."/>
            <person name="Muraki A."/>
            <person name="Nakayama S."/>
            <person name="Nakazaki N."/>
            <person name="Naruo K."/>
            <person name="Okumura S."/>
            <person name="Shinpo S."/>
            <person name="Takeuchi C."/>
            <person name="Wada T."/>
            <person name="Watanabe A."/>
            <person name="Yamada M."/>
            <person name="Yasuda M."/>
            <person name="Sato S."/>
            <person name="de la Bastide M."/>
            <person name="Huang E."/>
            <person name="Spiegel L."/>
            <person name="Gnoj L."/>
            <person name="O'Shaughnessy A."/>
            <person name="Preston R."/>
            <person name="Habermann K."/>
            <person name="Murray J."/>
            <person name="Johnson D."/>
            <person name="Rohlfing T."/>
            <person name="Nelson J."/>
            <person name="Stoneking T."/>
            <person name="Pepin K."/>
            <person name="Spieth J."/>
            <person name="Sekhon M."/>
            <person name="Armstrong J."/>
            <person name="Becker M."/>
            <person name="Belter E."/>
            <person name="Cordum H."/>
            <person name="Cordes M."/>
            <person name="Courtney L."/>
            <person name="Courtney W."/>
            <person name="Dante M."/>
            <person name="Du H."/>
            <person name="Edwards J."/>
            <person name="Fryman J."/>
            <person name="Haakensen B."/>
            <person name="Lamar E."/>
            <person name="Latreille P."/>
            <person name="Leonard S."/>
            <person name="Meyer R."/>
            <person name="Mulvaney E."/>
            <person name="Ozersky P."/>
            <person name="Riley A."/>
            <person name="Strowmatt C."/>
            <person name="Wagner-McPherson C."/>
            <person name="Wollam A."/>
            <person name="Yoakum M."/>
            <person name="Bell M."/>
            <person name="Dedhia N."/>
            <person name="Parnell L."/>
            <person name="Shah R."/>
            <person name="Rodriguez M."/>
            <person name="Hoon See L."/>
            <person name="Vil D."/>
            <person name="Baker J."/>
            <person name="Kirchoff K."/>
            <person name="Toth K."/>
            <person name="King L."/>
            <person name="Bahret A."/>
            <person name="Miller B."/>
            <person name="Marra M.A."/>
            <person name="Martienssen R."/>
            <person name="McCombie W.R."/>
            <person name="Wilson R.K."/>
            <person name="Murphy G."/>
            <person name="Bancroft I."/>
            <person name="Volckaert G."/>
            <person name="Wambutt R."/>
            <person name="Duesterhoeft A."/>
            <person name="Stiekema W."/>
            <person name="Pohl T."/>
            <person name="Entian K.-D."/>
            <person name="Terryn N."/>
            <person name="Hartley N."/>
            <person name="Bent E."/>
            <person name="Johnson S."/>
            <person name="Langham S.-A."/>
            <person name="McCullagh B."/>
            <person name="Robben J."/>
            <person name="Grymonprez B."/>
            <person name="Zimmermann W."/>
            <person name="Ramsperger U."/>
            <person name="Wedler H."/>
            <person name="Balke K."/>
            <person name="Wedler E."/>
            <person name="Peters S."/>
            <person name="van Staveren M."/>
            <person name="Dirkse W."/>
            <person name="Mooijman P."/>
            <person name="Klein Lankhorst R."/>
            <person name="Weitzenegger T."/>
            <person name="Bothe G."/>
            <person name="Rose M."/>
            <person name="Hauf J."/>
            <person name="Berneiser S."/>
            <person name="Hempel S."/>
            <person name="Feldpausch M."/>
            <person name="Lamberth S."/>
            <person name="Villarroel R."/>
            <person name="Gielen J."/>
            <person name="Ardiles W."/>
            <person name="Bents O."/>
            <person name="Lemcke K."/>
            <person name="Kolesov G."/>
            <person name="Mayer K.F.X."/>
            <person name="Rudd S."/>
            <person name="Schoof H."/>
            <person name="Schueller C."/>
            <person name="Zaccaria P."/>
            <person name="Mewes H.-W."/>
            <person name="Bevan M."/>
            <person name="Fransz P.F."/>
        </authorList>
    </citation>
    <scope>NUCLEOTIDE SEQUENCE [LARGE SCALE GENOMIC DNA]</scope>
    <source>
        <strain>cv. Columbia</strain>
    </source>
</reference>
<reference key="3">
    <citation type="journal article" date="2017" name="Plant J.">
        <title>Araport11: a complete reannotation of the Arabidopsis thaliana reference genome.</title>
        <authorList>
            <person name="Cheng C.Y."/>
            <person name="Krishnakumar V."/>
            <person name="Chan A.P."/>
            <person name="Thibaud-Nissen F."/>
            <person name="Schobel S."/>
            <person name="Town C.D."/>
        </authorList>
    </citation>
    <scope>GENOME REANNOTATION</scope>
    <source>
        <strain>cv. Columbia</strain>
    </source>
</reference>
<reference key="4">
    <citation type="submission" date="2006-07" db="EMBL/GenBank/DDBJ databases">
        <title>Arabidopsis ORF clones.</title>
        <authorList>
            <person name="Quinitio C."/>
            <person name="Chen H."/>
            <person name="Kim C.J."/>
            <person name="Shinn P."/>
            <person name="Ecker J.R."/>
        </authorList>
    </citation>
    <scope>NUCLEOTIDE SEQUENCE [LARGE SCALE MRNA]</scope>
    <source>
        <strain>cv. Columbia</strain>
    </source>
</reference>
<evidence type="ECO:0000255" key="1">
    <source>
        <dbReference type="PROSITE-ProRule" id="PRU00080"/>
    </source>
</evidence>
<evidence type="ECO:0000305" key="2"/>
<comment type="sequence caution" evidence="2">
    <conflict type="erroneous gene model prediction">
        <sequence resource="EMBL-CDS" id="BAB08371"/>
    </conflict>
</comment>
<comment type="sequence caution" evidence="2">
    <conflict type="erroneous gene model prediction">
        <sequence resource="EMBL-CDS" id="CAB86077"/>
    </conflict>
</comment>
<organism>
    <name type="scientific">Arabidopsis thaliana</name>
    <name type="common">Mouse-ear cress</name>
    <dbReference type="NCBI Taxonomy" id="3702"/>
    <lineage>
        <taxon>Eukaryota</taxon>
        <taxon>Viridiplantae</taxon>
        <taxon>Streptophyta</taxon>
        <taxon>Embryophyta</taxon>
        <taxon>Tracheophyta</taxon>
        <taxon>Spermatophyta</taxon>
        <taxon>Magnoliopsida</taxon>
        <taxon>eudicotyledons</taxon>
        <taxon>Gunneridae</taxon>
        <taxon>Pentapetalae</taxon>
        <taxon>rosids</taxon>
        <taxon>malvids</taxon>
        <taxon>Brassicales</taxon>
        <taxon>Brassicaceae</taxon>
        <taxon>Camelineae</taxon>
        <taxon>Arabidopsis</taxon>
    </lineage>
</organism>
<dbReference type="EMBL" id="AB005240">
    <property type="protein sequence ID" value="BAB08371.1"/>
    <property type="status" value="ALT_SEQ"/>
    <property type="molecule type" value="Genomic_DNA"/>
</dbReference>
<dbReference type="EMBL" id="AL163002">
    <property type="protein sequence ID" value="CAB86077.1"/>
    <property type="status" value="ALT_SEQ"/>
    <property type="molecule type" value="Genomic_DNA"/>
</dbReference>
<dbReference type="EMBL" id="CP002688">
    <property type="protein sequence ID" value="AED90556.1"/>
    <property type="molecule type" value="Genomic_DNA"/>
</dbReference>
<dbReference type="EMBL" id="CP002688">
    <property type="protein sequence ID" value="ANM69780.1"/>
    <property type="molecule type" value="Genomic_DNA"/>
</dbReference>
<dbReference type="EMBL" id="BT022002">
    <property type="protein sequence ID" value="AAY25414.1"/>
    <property type="molecule type" value="mRNA"/>
</dbReference>
<dbReference type="EMBL" id="BT026075">
    <property type="protein sequence ID" value="ABG48431.1"/>
    <property type="molecule type" value="mRNA"/>
</dbReference>
<dbReference type="PIR" id="T48331">
    <property type="entry name" value="T48331"/>
</dbReference>
<dbReference type="RefSeq" id="NP_001331434.1">
    <property type="nucleotide sequence ID" value="NM_001342686.1"/>
</dbReference>
<dbReference type="RefSeq" id="NP_195930.2">
    <property type="nucleotide sequence ID" value="NM_120388.4"/>
</dbReference>
<dbReference type="FunCoup" id="Q501G5">
    <property type="interactions" value="1605"/>
</dbReference>
<dbReference type="STRING" id="3702.Q501G5"/>
<dbReference type="PaxDb" id="3702-AT5G03100.1"/>
<dbReference type="ProteomicsDB" id="232053"/>
<dbReference type="EnsemblPlants" id="AT5G03100.1">
    <property type="protein sequence ID" value="AT5G03100.1"/>
    <property type="gene ID" value="AT5G03100"/>
</dbReference>
<dbReference type="EnsemblPlants" id="AT5G03100.2">
    <property type="protein sequence ID" value="AT5G03100.2"/>
    <property type="gene ID" value="AT5G03100"/>
</dbReference>
<dbReference type="GeneID" id="831808"/>
<dbReference type="Gramene" id="AT5G03100.1">
    <property type="protein sequence ID" value="AT5G03100.1"/>
    <property type="gene ID" value="AT5G03100"/>
</dbReference>
<dbReference type="Gramene" id="AT5G03100.2">
    <property type="protein sequence ID" value="AT5G03100.2"/>
    <property type="gene ID" value="AT5G03100"/>
</dbReference>
<dbReference type="KEGG" id="ath:AT5G03100"/>
<dbReference type="Araport" id="AT5G03100"/>
<dbReference type="TAIR" id="AT5G03100"/>
<dbReference type="HOGENOM" id="CLU_010721_5_0_1"/>
<dbReference type="InParanoid" id="Q501G5"/>
<dbReference type="OMA" id="DTWINLA"/>
<dbReference type="PhylomeDB" id="Q501G5"/>
<dbReference type="PRO" id="PR:Q501G5"/>
<dbReference type="Proteomes" id="UP000006548">
    <property type="component" value="Chromosome 5"/>
</dbReference>
<dbReference type="ExpressionAtlas" id="Q501G5">
    <property type="expression patterns" value="baseline and differential"/>
</dbReference>
<dbReference type="GO" id="GO:0005777">
    <property type="term" value="C:peroxisome"/>
    <property type="evidence" value="ECO:0000314"/>
    <property type="project" value="TAIR"/>
</dbReference>
<dbReference type="CDD" id="cd22160">
    <property type="entry name" value="F-box_AtFBL13-like"/>
    <property type="match status" value="1"/>
</dbReference>
<dbReference type="Gene3D" id="1.20.1280.50">
    <property type="match status" value="1"/>
</dbReference>
<dbReference type="Gene3D" id="3.80.10.10">
    <property type="entry name" value="Ribonuclease Inhibitor"/>
    <property type="match status" value="1"/>
</dbReference>
<dbReference type="InterPro" id="IPR036047">
    <property type="entry name" value="F-box-like_dom_sf"/>
</dbReference>
<dbReference type="InterPro" id="IPR053781">
    <property type="entry name" value="F-box_AtFBL13-like"/>
</dbReference>
<dbReference type="InterPro" id="IPR001810">
    <property type="entry name" value="F-box_dom"/>
</dbReference>
<dbReference type="InterPro" id="IPR044997">
    <property type="entry name" value="F-box_plant"/>
</dbReference>
<dbReference type="InterPro" id="IPR055357">
    <property type="entry name" value="LRR_At1g61320_AtMIF1"/>
</dbReference>
<dbReference type="InterPro" id="IPR032675">
    <property type="entry name" value="LRR_dom_sf"/>
</dbReference>
<dbReference type="PANTHER" id="PTHR32153">
    <property type="entry name" value="OJ000223_09.16 PROTEIN"/>
    <property type="match status" value="1"/>
</dbReference>
<dbReference type="Pfam" id="PF00646">
    <property type="entry name" value="F-box"/>
    <property type="match status" value="1"/>
</dbReference>
<dbReference type="Pfam" id="PF23622">
    <property type="entry name" value="LRR_At1g61320_AtMIF1"/>
    <property type="match status" value="1"/>
</dbReference>
<dbReference type="SUPFAM" id="SSF81383">
    <property type="entry name" value="F-box domain"/>
    <property type="match status" value="1"/>
</dbReference>
<dbReference type="SUPFAM" id="SSF52047">
    <property type="entry name" value="RNI-like"/>
    <property type="match status" value="1"/>
</dbReference>
<dbReference type="PROSITE" id="PS50181">
    <property type="entry name" value="FBOX"/>
    <property type="match status" value="1"/>
</dbReference>
<feature type="chain" id="PRO_0000283517" description="F-box protein At5g03100">
    <location>
        <begin position="1"/>
        <end position="307"/>
    </location>
</feature>
<feature type="domain" description="F-box" evidence="1">
    <location>
        <begin position="8"/>
        <end position="54"/>
    </location>
</feature>
<accession>Q501G5</accession>
<accession>Q9FYN2</accession>
<accession>Q9LYX5</accession>
<sequence length="307" mass="34836">MKRAGGGVDFISSLPDEILHHILANTPTKLAIRTSVLSKRWKHVWYETPSISIVCNRVDPDSLNKTLSSYSTPKIKSFDVTISRDVTVPEIDTWINLALSRKAENVSLRFTSHYRFRDTFFINSSLKQLSLTLVYCILNPKCVVSWSSLRNLSLNRCKVSDDSIAKILTGCSLLESLTLNLCDRLNDLDLSKSLSLRRLEILGDRWTPERIVAPHIRYLRLENYQRPSTLVDVSSLTEANLGLSKHVLDYFTCEMETESLQYMVRQTVVKLQNIKKLTIGGIFLQILSLAELCGVTLPVFQNSISKL</sequence>
<name>FB250_ARATH</name>